<feature type="chain" id="PRO_0000385067" description="Uncharacterized protein ORF37">
    <location>
        <begin position="1"/>
        <end position="76"/>
    </location>
</feature>
<reference key="1">
    <citation type="journal article" date="2005" name="J. Gen. Virol.">
        <title>A novel class of herpesvirus with bivalve hosts.</title>
        <authorList>
            <person name="Davison A.J."/>
            <person name="Trus B.L."/>
            <person name="Cheng N."/>
            <person name="Steven A.C."/>
            <person name="Watson M.S."/>
            <person name="Cunningham C."/>
            <person name="Le Deuff R.M."/>
            <person name="Renault T."/>
        </authorList>
    </citation>
    <scope>NUCLEOTIDE SEQUENCE [LARGE SCALE GENOMIC DNA]</scope>
</reference>
<protein>
    <recommendedName>
        <fullName>Uncharacterized protein ORF37</fullName>
    </recommendedName>
</protein>
<gene>
    <name type="ORF">ORF37</name>
</gene>
<dbReference type="EMBL" id="AY509253">
    <property type="protein sequence ID" value="AAS00928.1"/>
    <property type="molecule type" value="Genomic_DNA"/>
</dbReference>
<dbReference type="RefSeq" id="YP_024581.1">
    <property type="nucleotide sequence ID" value="NC_005881.2"/>
</dbReference>
<dbReference type="KEGG" id="vg:2948255"/>
<dbReference type="Proteomes" id="UP000007021">
    <property type="component" value="Segment"/>
</dbReference>
<name>Y037_OSHVF</name>
<sequence length="76" mass="9082">MIFFTRNHRAINAHFLYDHNDRQILNRQFPPDNITMEERAVIKSVGRELSRIMCIVETNVLTRAGGYFSIFYRDFD</sequence>
<organismHost>
    <name type="scientific">Magallana gigas</name>
    <name type="common">Pacific oyster</name>
    <name type="synonym">Crassostrea gigas</name>
    <dbReference type="NCBI Taxonomy" id="29159"/>
</organismHost>
<organismHost>
    <name type="scientific">Pecten maximus</name>
    <name type="common">King scallop</name>
    <name type="synonym">Pilgrim's clam</name>
    <dbReference type="NCBI Taxonomy" id="6579"/>
</organismHost>
<proteinExistence type="predicted"/>
<accession>Q6R7I7</accession>
<keyword id="KW-1185">Reference proteome</keyword>
<organism>
    <name type="scientific">Ostreid herpesvirus 1 (isolate France)</name>
    <name type="common">OsHV-1</name>
    <name type="synonym">Pacific oyster herpesvirus</name>
    <dbReference type="NCBI Taxonomy" id="654903"/>
    <lineage>
        <taxon>Viruses</taxon>
        <taxon>Duplodnaviria</taxon>
        <taxon>Heunggongvirae</taxon>
        <taxon>Peploviricota</taxon>
        <taxon>Herviviricetes</taxon>
        <taxon>Herpesvirales</taxon>
        <taxon>Malacoherpesviridae</taxon>
        <taxon>Ostreavirus</taxon>
        <taxon>Ostreavirus ostreidmalaco1</taxon>
        <taxon>Ostreid herpesvirus 1</taxon>
    </lineage>
</organism>